<gene>
    <name evidence="1" type="primary">rhaA</name>
    <name type="ordered locus">SF3980</name>
    <name type="ordered locus">S3768</name>
</gene>
<sequence>MTTQLEQAWELAKQRFAAVGIDVEEALRQLDRLPVSMHCWQGDDVSGFENPEGSLTGGIQATGNYPGKARNASELRADLEQAMRLIPGPKRLNLHAIYLESDTPVSRDQIKPEHFKNWVEWAKANQLGLDFNPSCFSHPLSADGFTLSHPDDSIRQFWIDHCKASRRVSAYFGEQLGTPSVMNIWIPDGMKDITVDRLAPRQRLLAALDEVISEKLNPAHHIDAVESKLFGIGAESYTVGSNEFYMGYATSRQTALCLDAGHFHPTEVISDKISAAMLYVPQLLLHVSRPVRWDSDHVVLLDDETQAIASEIVRHDLFDRVHIGLDFFDASINRIAAWVIGTRNMKKALLRALLEPTAELRKLEAAGDYTARLALLEEQKSLPRQAVWEMYCQHHDTPAGSEWLESVRAYEKAILSQRG</sequence>
<accession>Q83IU4</accession>
<accession>Q7UB79</accession>
<proteinExistence type="inferred from homology"/>
<keyword id="KW-0963">Cytoplasm</keyword>
<keyword id="KW-0413">Isomerase</keyword>
<keyword id="KW-0464">Manganese</keyword>
<keyword id="KW-0479">Metal-binding</keyword>
<keyword id="KW-1185">Reference proteome</keyword>
<keyword id="KW-0684">Rhamnose metabolism</keyword>
<comment type="function">
    <text evidence="1">Catalyzes the interconversion of L-rhamnose and L-rhamnulose.</text>
</comment>
<comment type="catalytic activity">
    <reaction evidence="1">
        <text>L-rhamnopyranose = L-rhamnulose</text>
        <dbReference type="Rhea" id="RHEA:23160"/>
        <dbReference type="ChEBI" id="CHEBI:17897"/>
        <dbReference type="ChEBI" id="CHEBI:62346"/>
        <dbReference type="EC" id="5.3.1.14"/>
    </reaction>
</comment>
<comment type="cofactor">
    <cofactor evidence="1">
        <name>Mn(2+)</name>
        <dbReference type="ChEBI" id="CHEBI:29035"/>
    </cofactor>
    <text evidence="1">Binds 1 Mn(2+) ion per subunit.</text>
</comment>
<comment type="pathway">
    <text evidence="1">Carbohydrate degradation; L-rhamnose degradation; glycerone phosphate from L-rhamnose: step 1/3.</text>
</comment>
<comment type="subunit">
    <text evidence="1">Homotetramer.</text>
</comment>
<comment type="subcellular location">
    <subcellularLocation>
        <location evidence="1">Cytoplasm</location>
    </subcellularLocation>
</comment>
<comment type="similarity">
    <text evidence="1">Belongs to the rhamnose isomerase family.</text>
</comment>
<name>RHAA_SHIFL</name>
<protein>
    <recommendedName>
        <fullName evidence="1">L-rhamnose isomerase</fullName>
        <ecNumber evidence="1">5.3.1.14</ecNumber>
    </recommendedName>
</protein>
<evidence type="ECO:0000255" key="1">
    <source>
        <dbReference type="HAMAP-Rule" id="MF_00541"/>
    </source>
</evidence>
<reference key="1">
    <citation type="journal article" date="2002" name="Nucleic Acids Res.">
        <title>Genome sequence of Shigella flexneri 2a: insights into pathogenicity through comparison with genomes of Escherichia coli K12 and O157.</title>
        <authorList>
            <person name="Jin Q."/>
            <person name="Yuan Z."/>
            <person name="Xu J."/>
            <person name="Wang Y."/>
            <person name="Shen Y."/>
            <person name="Lu W."/>
            <person name="Wang J."/>
            <person name="Liu H."/>
            <person name="Yang J."/>
            <person name="Yang F."/>
            <person name="Zhang X."/>
            <person name="Zhang J."/>
            <person name="Yang G."/>
            <person name="Wu H."/>
            <person name="Qu D."/>
            <person name="Dong J."/>
            <person name="Sun L."/>
            <person name="Xue Y."/>
            <person name="Zhao A."/>
            <person name="Gao Y."/>
            <person name="Zhu J."/>
            <person name="Kan B."/>
            <person name="Ding K."/>
            <person name="Chen S."/>
            <person name="Cheng H."/>
            <person name="Yao Z."/>
            <person name="He B."/>
            <person name="Chen R."/>
            <person name="Ma D."/>
            <person name="Qiang B."/>
            <person name="Wen Y."/>
            <person name="Hou Y."/>
            <person name="Yu J."/>
        </authorList>
    </citation>
    <scope>NUCLEOTIDE SEQUENCE [LARGE SCALE GENOMIC DNA]</scope>
    <source>
        <strain>301 / Serotype 2a</strain>
    </source>
</reference>
<reference key="2">
    <citation type="journal article" date="2003" name="Infect. Immun.">
        <title>Complete genome sequence and comparative genomics of Shigella flexneri serotype 2a strain 2457T.</title>
        <authorList>
            <person name="Wei J."/>
            <person name="Goldberg M.B."/>
            <person name="Burland V."/>
            <person name="Venkatesan M.M."/>
            <person name="Deng W."/>
            <person name="Fournier G."/>
            <person name="Mayhew G.F."/>
            <person name="Plunkett G. III"/>
            <person name="Rose D.J."/>
            <person name="Darling A."/>
            <person name="Mau B."/>
            <person name="Perna N.T."/>
            <person name="Payne S.M."/>
            <person name="Runyen-Janecky L.J."/>
            <person name="Zhou S."/>
            <person name="Schwartz D.C."/>
            <person name="Blattner F.R."/>
        </authorList>
    </citation>
    <scope>NUCLEOTIDE SEQUENCE [LARGE SCALE GENOMIC DNA]</scope>
    <source>
        <strain>ATCC 700930 / 2457T / Serotype 2a</strain>
    </source>
</reference>
<dbReference type="EC" id="5.3.1.14" evidence="1"/>
<dbReference type="EMBL" id="AE005674">
    <property type="protein sequence ID" value="AAN45414.2"/>
    <property type="molecule type" value="Genomic_DNA"/>
</dbReference>
<dbReference type="EMBL" id="AE014073">
    <property type="protein sequence ID" value="AAP18785.1"/>
    <property type="molecule type" value="Genomic_DNA"/>
</dbReference>
<dbReference type="RefSeq" id="NP_709707.2">
    <property type="nucleotide sequence ID" value="NC_004337.2"/>
</dbReference>
<dbReference type="RefSeq" id="WP_000211506.1">
    <property type="nucleotide sequence ID" value="NZ_WPGW01000095.1"/>
</dbReference>
<dbReference type="SMR" id="Q83IU4"/>
<dbReference type="STRING" id="198214.SF3980"/>
<dbReference type="PaxDb" id="198214-SF3980"/>
<dbReference type="GeneID" id="1027769"/>
<dbReference type="KEGG" id="sfl:SF3980"/>
<dbReference type="KEGG" id="sfx:S3768"/>
<dbReference type="PATRIC" id="fig|198214.7.peg.4689"/>
<dbReference type="HOGENOM" id="CLU_052790_0_0_6"/>
<dbReference type="UniPathway" id="UPA00541">
    <property type="reaction ID" value="UER00601"/>
</dbReference>
<dbReference type="Proteomes" id="UP000001006">
    <property type="component" value="Chromosome"/>
</dbReference>
<dbReference type="Proteomes" id="UP000002673">
    <property type="component" value="Chromosome"/>
</dbReference>
<dbReference type="GO" id="GO:0005737">
    <property type="term" value="C:cytoplasm"/>
    <property type="evidence" value="ECO:0007669"/>
    <property type="project" value="UniProtKB-SubCell"/>
</dbReference>
<dbReference type="GO" id="GO:0008740">
    <property type="term" value="F:L-rhamnose isomerase activity"/>
    <property type="evidence" value="ECO:0007669"/>
    <property type="project" value="UniProtKB-UniRule"/>
</dbReference>
<dbReference type="GO" id="GO:0030145">
    <property type="term" value="F:manganese ion binding"/>
    <property type="evidence" value="ECO:0007669"/>
    <property type="project" value="UniProtKB-UniRule"/>
</dbReference>
<dbReference type="GO" id="GO:0019324">
    <property type="term" value="P:L-lyxose metabolic process"/>
    <property type="evidence" value="ECO:0007669"/>
    <property type="project" value="TreeGrafter"/>
</dbReference>
<dbReference type="GO" id="GO:0019301">
    <property type="term" value="P:rhamnose catabolic process"/>
    <property type="evidence" value="ECO:0007669"/>
    <property type="project" value="UniProtKB-UniRule"/>
</dbReference>
<dbReference type="FunFam" id="3.20.20.150:FF:000006">
    <property type="entry name" value="L-rhamnose isomerase"/>
    <property type="match status" value="1"/>
</dbReference>
<dbReference type="Gene3D" id="3.20.20.150">
    <property type="entry name" value="Divalent-metal-dependent TIM barrel enzymes"/>
    <property type="match status" value="1"/>
</dbReference>
<dbReference type="HAMAP" id="MF_00541">
    <property type="entry name" value="RhaA"/>
    <property type="match status" value="1"/>
</dbReference>
<dbReference type="InterPro" id="IPR050337">
    <property type="entry name" value="L-rhamnose_isomerase"/>
</dbReference>
<dbReference type="InterPro" id="IPR009308">
    <property type="entry name" value="Rhamnose_isomerase"/>
</dbReference>
<dbReference type="InterPro" id="IPR036237">
    <property type="entry name" value="Xyl_isomerase-like_sf"/>
</dbReference>
<dbReference type="NCBIfam" id="NF002203">
    <property type="entry name" value="PRK01076.1"/>
    <property type="match status" value="1"/>
</dbReference>
<dbReference type="NCBIfam" id="TIGR01748">
    <property type="entry name" value="rhaA"/>
    <property type="match status" value="1"/>
</dbReference>
<dbReference type="PANTHER" id="PTHR30268">
    <property type="entry name" value="L-RHAMNOSE ISOMERASE"/>
    <property type="match status" value="1"/>
</dbReference>
<dbReference type="PANTHER" id="PTHR30268:SF0">
    <property type="entry name" value="L-RHAMNOSE ISOMERASE"/>
    <property type="match status" value="1"/>
</dbReference>
<dbReference type="Pfam" id="PF06134">
    <property type="entry name" value="RhaA"/>
    <property type="match status" value="1"/>
</dbReference>
<dbReference type="SUPFAM" id="SSF51658">
    <property type="entry name" value="Xylose isomerase-like"/>
    <property type="match status" value="1"/>
</dbReference>
<organism>
    <name type="scientific">Shigella flexneri</name>
    <dbReference type="NCBI Taxonomy" id="623"/>
    <lineage>
        <taxon>Bacteria</taxon>
        <taxon>Pseudomonadati</taxon>
        <taxon>Pseudomonadota</taxon>
        <taxon>Gammaproteobacteria</taxon>
        <taxon>Enterobacterales</taxon>
        <taxon>Enterobacteriaceae</taxon>
        <taxon>Shigella</taxon>
    </lineage>
</organism>
<feature type="chain" id="PRO_0000090567" description="L-rhamnose isomerase">
    <location>
        <begin position="1"/>
        <end position="419"/>
    </location>
</feature>
<feature type="binding site" evidence="1">
    <location>
        <position position="262"/>
    </location>
    <ligand>
        <name>Mn(2+)</name>
        <dbReference type="ChEBI" id="CHEBI:29035"/>
    </ligand>
</feature>
<feature type="binding site" evidence="1">
    <location>
        <position position="294"/>
    </location>
    <ligand>
        <name>Mn(2+)</name>
        <dbReference type="ChEBI" id="CHEBI:29035"/>
    </ligand>
</feature>
<feature type="binding site" evidence="1">
    <location>
        <position position="296"/>
    </location>
    <ligand>
        <name>Mn(2+)</name>
        <dbReference type="ChEBI" id="CHEBI:29035"/>
    </ligand>
</feature>